<protein>
    <recommendedName>
        <fullName evidence="1">3-deoxy-manno-octulosonate cytidylyltransferase</fullName>
        <ecNumber evidence="1">2.7.7.38</ecNumber>
    </recommendedName>
    <alternativeName>
        <fullName evidence="1">CMP-2-keto-3-deoxyoctulosonic acid synthase</fullName>
        <shortName evidence="1">CKS</shortName>
        <shortName evidence="1">CMP-KDO synthase</shortName>
    </alternativeName>
</protein>
<name>KDSB_OLEA2</name>
<dbReference type="EC" id="2.7.7.38" evidence="1"/>
<dbReference type="EMBL" id="CP000112">
    <property type="protein sequence ID" value="ABB40440.1"/>
    <property type="molecule type" value="Genomic_DNA"/>
</dbReference>
<dbReference type="RefSeq" id="WP_011369316.1">
    <property type="nucleotide sequence ID" value="NC_007519.1"/>
</dbReference>
<dbReference type="SMR" id="Q30V56"/>
<dbReference type="STRING" id="207559.Dde_3647"/>
<dbReference type="KEGG" id="dde:Dde_3647"/>
<dbReference type="eggNOG" id="COG1212">
    <property type="taxonomic scope" value="Bacteria"/>
</dbReference>
<dbReference type="HOGENOM" id="CLU_065038_0_1_7"/>
<dbReference type="UniPathway" id="UPA00030"/>
<dbReference type="UniPathway" id="UPA00358">
    <property type="reaction ID" value="UER00476"/>
</dbReference>
<dbReference type="Proteomes" id="UP000002710">
    <property type="component" value="Chromosome"/>
</dbReference>
<dbReference type="GO" id="GO:0005829">
    <property type="term" value="C:cytosol"/>
    <property type="evidence" value="ECO:0007669"/>
    <property type="project" value="TreeGrafter"/>
</dbReference>
<dbReference type="GO" id="GO:0008690">
    <property type="term" value="F:3-deoxy-manno-octulosonate cytidylyltransferase activity"/>
    <property type="evidence" value="ECO:0007669"/>
    <property type="project" value="UniProtKB-UniRule"/>
</dbReference>
<dbReference type="GO" id="GO:0033468">
    <property type="term" value="P:CMP-keto-3-deoxy-D-manno-octulosonic acid biosynthetic process"/>
    <property type="evidence" value="ECO:0007669"/>
    <property type="project" value="UniProtKB-UniRule"/>
</dbReference>
<dbReference type="GO" id="GO:0009103">
    <property type="term" value="P:lipopolysaccharide biosynthetic process"/>
    <property type="evidence" value="ECO:0007669"/>
    <property type="project" value="UniProtKB-UniRule"/>
</dbReference>
<dbReference type="CDD" id="cd02517">
    <property type="entry name" value="CMP-KDO-Synthetase"/>
    <property type="match status" value="1"/>
</dbReference>
<dbReference type="FunFam" id="3.90.550.10:FF:000011">
    <property type="entry name" value="3-deoxy-manno-octulosonate cytidylyltransferase"/>
    <property type="match status" value="1"/>
</dbReference>
<dbReference type="Gene3D" id="3.90.550.10">
    <property type="entry name" value="Spore Coat Polysaccharide Biosynthesis Protein SpsA, Chain A"/>
    <property type="match status" value="1"/>
</dbReference>
<dbReference type="HAMAP" id="MF_00057">
    <property type="entry name" value="KdsB"/>
    <property type="match status" value="1"/>
</dbReference>
<dbReference type="InterPro" id="IPR003329">
    <property type="entry name" value="Cytidylyl_trans"/>
</dbReference>
<dbReference type="InterPro" id="IPR004528">
    <property type="entry name" value="KdsB"/>
</dbReference>
<dbReference type="InterPro" id="IPR029044">
    <property type="entry name" value="Nucleotide-diphossugar_trans"/>
</dbReference>
<dbReference type="NCBIfam" id="TIGR00466">
    <property type="entry name" value="kdsB"/>
    <property type="match status" value="1"/>
</dbReference>
<dbReference type="NCBIfam" id="NF003950">
    <property type="entry name" value="PRK05450.1-3"/>
    <property type="match status" value="1"/>
</dbReference>
<dbReference type="NCBIfam" id="NF003952">
    <property type="entry name" value="PRK05450.1-5"/>
    <property type="match status" value="1"/>
</dbReference>
<dbReference type="NCBIfam" id="NF009905">
    <property type="entry name" value="PRK13368.1"/>
    <property type="match status" value="1"/>
</dbReference>
<dbReference type="PANTHER" id="PTHR42866">
    <property type="entry name" value="3-DEOXY-MANNO-OCTULOSONATE CYTIDYLYLTRANSFERASE"/>
    <property type="match status" value="1"/>
</dbReference>
<dbReference type="PANTHER" id="PTHR42866:SF2">
    <property type="entry name" value="3-DEOXY-MANNO-OCTULOSONATE CYTIDYLYLTRANSFERASE, MITOCHONDRIAL"/>
    <property type="match status" value="1"/>
</dbReference>
<dbReference type="Pfam" id="PF02348">
    <property type="entry name" value="CTP_transf_3"/>
    <property type="match status" value="1"/>
</dbReference>
<dbReference type="SUPFAM" id="SSF53448">
    <property type="entry name" value="Nucleotide-diphospho-sugar transferases"/>
    <property type="match status" value="1"/>
</dbReference>
<evidence type="ECO:0000255" key="1">
    <source>
        <dbReference type="HAMAP-Rule" id="MF_00057"/>
    </source>
</evidence>
<organism>
    <name type="scientific">Oleidesulfovibrio alaskensis (strain ATCC BAA-1058 / DSM 17464 / G20)</name>
    <name type="common">Desulfovibrio alaskensis</name>
    <dbReference type="NCBI Taxonomy" id="207559"/>
    <lineage>
        <taxon>Bacteria</taxon>
        <taxon>Pseudomonadati</taxon>
        <taxon>Thermodesulfobacteriota</taxon>
        <taxon>Desulfovibrionia</taxon>
        <taxon>Desulfovibrionales</taxon>
        <taxon>Desulfovibrionaceae</taxon>
        <taxon>Oleidesulfovibrio</taxon>
    </lineage>
</organism>
<sequence>MTATACYGIIPARYDSSRFPGKPLADIQGRPMFWHVWHRASLCPQLQQVVLATDDGRIAEAAHALDVPYVMTRSDHPSGTDRVFEAATLLQLDEDAVVVNIQGDEPALEPRMLSELVRPFAEDAAVQVTTLARAISPQQAACPDVVKVVCTAGGDALYFSRAAIPYCRDGQSGAPCMGHVGLYAFRYQALRRFTQLEQSVLERTEKLEQLRLLENNIPIRVVETAYRTHGVDRPGDIDVIINMIRENEG</sequence>
<keyword id="KW-0963">Cytoplasm</keyword>
<keyword id="KW-0448">Lipopolysaccharide biosynthesis</keyword>
<keyword id="KW-0548">Nucleotidyltransferase</keyword>
<keyword id="KW-1185">Reference proteome</keyword>
<keyword id="KW-0808">Transferase</keyword>
<accession>Q30V56</accession>
<proteinExistence type="inferred from homology"/>
<feature type="chain" id="PRO_1000091867" description="3-deoxy-manno-octulosonate cytidylyltransferase">
    <location>
        <begin position="1"/>
        <end position="249"/>
    </location>
</feature>
<comment type="function">
    <text evidence="1">Activates KDO (a required 8-carbon sugar) for incorporation into bacterial lipopolysaccharide in Gram-negative bacteria.</text>
</comment>
<comment type="catalytic activity">
    <reaction evidence="1">
        <text>3-deoxy-alpha-D-manno-oct-2-ulosonate + CTP = CMP-3-deoxy-beta-D-manno-octulosonate + diphosphate</text>
        <dbReference type="Rhea" id="RHEA:23448"/>
        <dbReference type="ChEBI" id="CHEBI:33019"/>
        <dbReference type="ChEBI" id="CHEBI:37563"/>
        <dbReference type="ChEBI" id="CHEBI:85986"/>
        <dbReference type="ChEBI" id="CHEBI:85987"/>
        <dbReference type="EC" id="2.7.7.38"/>
    </reaction>
</comment>
<comment type="pathway">
    <text evidence="1">Nucleotide-sugar biosynthesis; CMP-3-deoxy-D-manno-octulosonate biosynthesis; CMP-3-deoxy-D-manno-octulosonate from 3-deoxy-D-manno-octulosonate and CTP: step 1/1.</text>
</comment>
<comment type="pathway">
    <text evidence="1">Bacterial outer membrane biogenesis; lipopolysaccharide biosynthesis.</text>
</comment>
<comment type="subcellular location">
    <subcellularLocation>
        <location evidence="1">Cytoplasm</location>
    </subcellularLocation>
</comment>
<comment type="similarity">
    <text evidence="1">Belongs to the KdsB family.</text>
</comment>
<gene>
    <name evidence="1" type="primary">kdsB</name>
    <name type="ordered locus">Dde_3647</name>
</gene>
<reference key="1">
    <citation type="journal article" date="2011" name="J. Bacteriol.">
        <title>Complete genome sequence and updated annotation of Desulfovibrio alaskensis G20.</title>
        <authorList>
            <person name="Hauser L.J."/>
            <person name="Land M.L."/>
            <person name="Brown S.D."/>
            <person name="Larimer F."/>
            <person name="Keller K.L."/>
            <person name="Rapp-Giles B.J."/>
            <person name="Price M.N."/>
            <person name="Lin M."/>
            <person name="Bruce D.C."/>
            <person name="Detter J.C."/>
            <person name="Tapia R."/>
            <person name="Han C.S."/>
            <person name="Goodwin L.A."/>
            <person name="Cheng J.F."/>
            <person name="Pitluck S."/>
            <person name="Copeland A."/>
            <person name="Lucas S."/>
            <person name="Nolan M."/>
            <person name="Lapidus A.L."/>
            <person name="Palumbo A.V."/>
            <person name="Wall J.D."/>
        </authorList>
    </citation>
    <scope>NUCLEOTIDE SEQUENCE [LARGE SCALE GENOMIC DNA]</scope>
    <source>
        <strain>ATCC BAA-1058 / DSM 17464 / G20</strain>
    </source>
</reference>